<protein>
    <recommendedName>
        <fullName evidence="1">Maturase K</fullName>
    </recommendedName>
    <alternativeName>
        <fullName evidence="1">Intron maturase</fullName>
    </alternativeName>
</protein>
<dbReference type="EMBL" id="AB039987">
    <property type="protein sequence ID" value="BAB64838.1"/>
    <property type="molecule type" value="Genomic_DNA"/>
</dbReference>
<dbReference type="RefSeq" id="YP_010143898.1">
    <property type="nucleotide sequence ID" value="NC_056979.1"/>
</dbReference>
<dbReference type="GeneID" id="67139931"/>
<dbReference type="GO" id="GO:0009507">
    <property type="term" value="C:chloroplast"/>
    <property type="evidence" value="ECO:0007669"/>
    <property type="project" value="UniProtKB-SubCell"/>
</dbReference>
<dbReference type="GO" id="GO:0003723">
    <property type="term" value="F:RNA binding"/>
    <property type="evidence" value="ECO:0007669"/>
    <property type="project" value="UniProtKB-KW"/>
</dbReference>
<dbReference type="GO" id="GO:0006397">
    <property type="term" value="P:mRNA processing"/>
    <property type="evidence" value="ECO:0007669"/>
    <property type="project" value="UniProtKB-KW"/>
</dbReference>
<dbReference type="GO" id="GO:0008380">
    <property type="term" value="P:RNA splicing"/>
    <property type="evidence" value="ECO:0007669"/>
    <property type="project" value="UniProtKB-UniRule"/>
</dbReference>
<dbReference type="GO" id="GO:0008033">
    <property type="term" value="P:tRNA processing"/>
    <property type="evidence" value="ECO:0007669"/>
    <property type="project" value="UniProtKB-KW"/>
</dbReference>
<dbReference type="HAMAP" id="MF_01390">
    <property type="entry name" value="MatK"/>
    <property type="match status" value="1"/>
</dbReference>
<dbReference type="InterPro" id="IPR024937">
    <property type="entry name" value="Domain_X"/>
</dbReference>
<dbReference type="InterPro" id="IPR002866">
    <property type="entry name" value="Maturase_MatK"/>
</dbReference>
<dbReference type="InterPro" id="IPR024942">
    <property type="entry name" value="Maturase_MatK_N"/>
</dbReference>
<dbReference type="PANTHER" id="PTHR34811">
    <property type="entry name" value="MATURASE K"/>
    <property type="match status" value="1"/>
</dbReference>
<dbReference type="PANTHER" id="PTHR34811:SF1">
    <property type="entry name" value="MATURASE K"/>
    <property type="match status" value="1"/>
</dbReference>
<dbReference type="Pfam" id="PF01348">
    <property type="entry name" value="Intron_maturas2"/>
    <property type="match status" value="1"/>
</dbReference>
<dbReference type="Pfam" id="PF01824">
    <property type="entry name" value="MatK_N"/>
    <property type="match status" value="1"/>
</dbReference>
<sequence length="509" mass="60303">MEEIQRYLQPDRSQQHNFLYPLIFQEYIYALAHDHGLNRNRLILLENPGYNNKFSFLIVKRLITRMYQQNHFLISTNDSNKNAFLGCNKSLYSQMISEGFAFIVEIPFSLRLISSLSSFEGKKIFKSHNLRSIHSTFPFLEDNFSHLNYVLDILIPYPVHLEILVQTLRYWVKDASSLHLLRFFLHEYWNLNSLITSKKPGYSFSKKNQRFFFFLYNSYVYECESTFVFLRNQSSHLRSTSFGALLERIYFYGKIERLVEVFAKDFQITLWLFKDPFMHYVRYQGKSILASKGTFLLMNKWKFYLVNFWQCHFSLCFHTGRIHINQLSNHSRNFMGYLSSVRLNPSMVRSQMLENSFLINNAIKKFDTLVPLIPLIGSLAKANFCTVLGHPISKPVWSDLSDSDIIDRFGRICRNLFHYYSGSSKKKTLYRIKYILRLSCARTLARKHKSTVRTFFKRSGSELLEEFLTSEEQVLSLTFPRASSSLWGVYRSRIWYLDIFCINDLANYQ</sequence>
<accession>Q95DR3</accession>
<keyword id="KW-0150">Chloroplast</keyword>
<keyword id="KW-0507">mRNA processing</keyword>
<keyword id="KW-0934">Plastid</keyword>
<keyword id="KW-0694">RNA-binding</keyword>
<keyword id="KW-0819">tRNA processing</keyword>
<proteinExistence type="inferred from homology"/>
<gene>
    <name evidence="1" type="primary">matK</name>
</gene>
<reference key="1">
    <citation type="journal article" date="2000" name="Plant Biol.">
        <title>Molecular phylogeny of Nicotiana (Solanaceae) based on the nucleotide sequence of the matK gene.</title>
        <authorList>
            <person name="Aoki S."/>
            <person name="Ito M."/>
        </authorList>
    </citation>
    <scope>NUCLEOTIDE SEQUENCE [GENOMIC DNA]</scope>
</reference>
<feature type="chain" id="PRO_0000143541" description="Maturase K">
    <location>
        <begin position="1"/>
        <end position="509"/>
    </location>
</feature>
<geneLocation type="chloroplast"/>
<evidence type="ECO:0000255" key="1">
    <source>
        <dbReference type="HAMAP-Rule" id="MF_01390"/>
    </source>
</evidence>
<organism>
    <name type="scientific">Nicotiana glauca</name>
    <name type="common">Glaucous tobacco</name>
    <name type="synonym">Tree tobacco</name>
    <dbReference type="NCBI Taxonomy" id="4090"/>
    <lineage>
        <taxon>Eukaryota</taxon>
        <taxon>Viridiplantae</taxon>
        <taxon>Streptophyta</taxon>
        <taxon>Embryophyta</taxon>
        <taxon>Tracheophyta</taxon>
        <taxon>Spermatophyta</taxon>
        <taxon>Magnoliopsida</taxon>
        <taxon>eudicotyledons</taxon>
        <taxon>Gunneridae</taxon>
        <taxon>Pentapetalae</taxon>
        <taxon>asterids</taxon>
        <taxon>lamiids</taxon>
        <taxon>Solanales</taxon>
        <taxon>Solanaceae</taxon>
        <taxon>Nicotianoideae</taxon>
        <taxon>Nicotianeae</taxon>
        <taxon>Nicotiana</taxon>
    </lineage>
</organism>
<comment type="function">
    <text evidence="1">Usually encoded in the trnK tRNA gene intron. Probably assists in splicing its own and other chloroplast group II introns.</text>
</comment>
<comment type="subcellular location">
    <subcellularLocation>
        <location>Plastid</location>
        <location>Chloroplast</location>
    </subcellularLocation>
</comment>
<comment type="similarity">
    <text evidence="1">Belongs to the intron maturase 2 family. MatK subfamily.</text>
</comment>
<name>MATK_NICGL</name>